<accession>Q9XX11</accession>
<gene>
    <name evidence="4" type="ORF">Y39A1A.21</name>
</gene>
<protein>
    <recommendedName>
        <fullName>ATP synthase subunit C lysine N-methyltransferase</fullName>
        <ecNumber evidence="2">2.1.1.-</ecNumber>
    </recommendedName>
</protein>
<organism>
    <name type="scientific">Caenorhabditis elegans</name>
    <dbReference type="NCBI Taxonomy" id="6239"/>
    <lineage>
        <taxon>Eukaryota</taxon>
        <taxon>Metazoa</taxon>
        <taxon>Ecdysozoa</taxon>
        <taxon>Nematoda</taxon>
        <taxon>Chromadorea</taxon>
        <taxon>Rhabditida</taxon>
        <taxon>Rhabditina</taxon>
        <taxon>Rhabditomorpha</taxon>
        <taxon>Rhabditoidea</taxon>
        <taxon>Rhabditidae</taxon>
        <taxon>Peloderinae</taxon>
        <taxon>Caenorhabditis</taxon>
    </lineage>
</organism>
<keyword id="KW-0489">Methyltransferase</keyword>
<keyword id="KW-0496">Mitochondrion</keyword>
<keyword id="KW-1185">Reference proteome</keyword>
<keyword id="KW-0949">S-adenosyl-L-methionine</keyword>
<keyword id="KW-0808">Transferase</keyword>
<feature type="chain" id="PRO_0000446890" description="ATP synthase subunit C lysine N-methyltransferase">
    <location>
        <begin position="1"/>
        <end position="190"/>
    </location>
</feature>
<evidence type="ECO:0000250" key="1">
    <source>
        <dbReference type="UniProtKB" id="Q6P4H8"/>
    </source>
</evidence>
<evidence type="ECO:0000269" key="2">
    <source>
    </source>
</evidence>
<evidence type="ECO:0000305" key="3"/>
<evidence type="ECO:0000312" key="4">
    <source>
        <dbReference type="WormBase" id="Y39A1A.21a"/>
    </source>
</evidence>
<proteinExistence type="evidence at protein level"/>
<dbReference type="EC" id="2.1.1.-" evidence="2"/>
<dbReference type="EMBL" id="BX284603">
    <property type="protein sequence ID" value="CAA21030.2"/>
    <property type="molecule type" value="Genomic_DNA"/>
</dbReference>
<dbReference type="PIR" id="T26741">
    <property type="entry name" value="T26741"/>
</dbReference>
<dbReference type="RefSeq" id="NP_001022840.2">
    <property type="nucleotide sequence ID" value="NM_001027669.4"/>
</dbReference>
<dbReference type="RefSeq" id="NP_001379034.1">
    <property type="nucleotide sequence ID" value="NM_001392205.1"/>
</dbReference>
<dbReference type="SMR" id="Q9XX11"/>
<dbReference type="FunCoup" id="Q9XX11">
    <property type="interactions" value="2508"/>
</dbReference>
<dbReference type="STRING" id="6239.Y39A1A.21a.1"/>
<dbReference type="PaxDb" id="6239-Y39A1A.21a"/>
<dbReference type="PeptideAtlas" id="Q9XX11"/>
<dbReference type="EnsemblMetazoa" id="Y39A1A.21a.1">
    <property type="protein sequence ID" value="Y39A1A.21a.1"/>
    <property type="gene ID" value="WBGene00012658"/>
</dbReference>
<dbReference type="EnsemblMetazoa" id="Y39A1A.21a.2">
    <property type="protein sequence ID" value="Y39A1A.21a.2"/>
    <property type="gene ID" value="WBGene00012658"/>
</dbReference>
<dbReference type="GeneID" id="176493"/>
<dbReference type="UCSC" id="Y39A1A.21a">
    <property type="organism name" value="c. elegans"/>
</dbReference>
<dbReference type="AGR" id="WB:WBGene00012658"/>
<dbReference type="WormBase" id="Y39A1A.21a">
    <property type="protein sequence ID" value="CE50211"/>
    <property type="gene ID" value="WBGene00012658"/>
</dbReference>
<dbReference type="eggNOG" id="KOG4058">
    <property type="taxonomic scope" value="Eukaryota"/>
</dbReference>
<dbReference type="GeneTree" id="ENSGT00390000014771"/>
<dbReference type="HOGENOM" id="CLU_068443_4_0_1"/>
<dbReference type="InParanoid" id="Q9XX11"/>
<dbReference type="OMA" id="NPWLVAY"/>
<dbReference type="OrthoDB" id="66144at2759"/>
<dbReference type="PRO" id="PR:Q9XX11"/>
<dbReference type="Proteomes" id="UP000001940">
    <property type="component" value="Chromosome III"/>
</dbReference>
<dbReference type="Bgee" id="WBGene00012658">
    <property type="expression patterns" value="Expressed in pharyngeal muscle cell (C elegans) and 4 other cell types or tissues"/>
</dbReference>
<dbReference type="ExpressionAtlas" id="Q9XX11">
    <property type="expression patterns" value="baseline and differential"/>
</dbReference>
<dbReference type="GO" id="GO:0005739">
    <property type="term" value="C:mitochondrion"/>
    <property type="evidence" value="ECO:0000250"/>
    <property type="project" value="UniProtKB"/>
</dbReference>
<dbReference type="GO" id="GO:0016279">
    <property type="term" value="F:protein-lysine N-methyltransferase activity"/>
    <property type="evidence" value="ECO:0000315"/>
    <property type="project" value="UniProtKB"/>
</dbReference>
<dbReference type="GO" id="GO:0018023">
    <property type="term" value="P:peptidyl-lysine trimethylation"/>
    <property type="evidence" value="ECO:0000315"/>
    <property type="project" value="UniProtKB"/>
</dbReference>
<dbReference type="GO" id="GO:1905273">
    <property type="term" value="P:positive regulation of proton-transporting ATP synthase activity, rotational mechanism"/>
    <property type="evidence" value="ECO:0000315"/>
    <property type="project" value="UniProtKB"/>
</dbReference>
<dbReference type="GO" id="GO:1905706">
    <property type="term" value="P:regulation of mitochondrial ATP synthesis coupled proton transport"/>
    <property type="evidence" value="ECO:0000315"/>
    <property type="project" value="UniProtKB"/>
</dbReference>
<dbReference type="Gene3D" id="3.40.50.150">
    <property type="entry name" value="Vaccinia Virus protein VP39"/>
    <property type="match status" value="1"/>
</dbReference>
<dbReference type="InterPro" id="IPR026170">
    <property type="entry name" value="FAM173A/B"/>
</dbReference>
<dbReference type="InterPro" id="IPR029063">
    <property type="entry name" value="SAM-dependent_MTases_sf"/>
</dbReference>
<dbReference type="PANTHER" id="PTHR13610:SF9">
    <property type="entry name" value="FI06469P"/>
    <property type="match status" value="1"/>
</dbReference>
<dbReference type="PANTHER" id="PTHR13610">
    <property type="entry name" value="METHYLTRANSFERASE DOMAIN-CONTAINING PROTEIN"/>
    <property type="match status" value="1"/>
</dbReference>
<dbReference type="SUPFAM" id="SSF53335">
    <property type="entry name" value="S-adenosyl-L-methionine-dependent methyltransferases"/>
    <property type="match status" value="1"/>
</dbReference>
<sequence length="190" mass="20493">MGMNTGLVIAGVAGATALAISAAAIPFVAPALRRVCIPYVPATTEQLANVSRALSLATSSNSNKKGTLIDLGSGDGRVVLQCAREGFNSTGVELNSILVAYSKYRSIREGLGKETRFMRKNIFKTDLNPYQTAVIFGAESLMGDLVPKLSEMRSNTNLLACRFPLPENDAWKLEHQIGEGIDAVWVYKRN</sequence>
<name>ACKMT_CAEEL</name>
<reference key="1">
    <citation type="journal article" date="1998" name="Science">
        <title>Genome sequence of the nematode C. elegans: a platform for investigating biology.</title>
        <authorList>
            <consortium name="The C. elegans sequencing consortium"/>
        </authorList>
    </citation>
    <scope>NUCLEOTIDE SEQUENCE [LARGE SCALE GENOMIC DNA]</scope>
    <source>
        <strain>Bristol N2</strain>
    </source>
</reference>
<reference key="2">
    <citation type="journal article" date="2019" name="J. Biol. Chem.">
        <title>Lysine methylation by the mitochondrial methyltransferase FAM173B optimizes the function of mitochondrial ATP synthase.</title>
        <authorList>
            <person name="Malecki J.M."/>
            <person name="Willemen H.L.D.M."/>
            <person name="Pinto R."/>
            <person name="Ho A.Y.Y."/>
            <person name="Moen A."/>
            <person name="Kjoenstad I.F."/>
            <person name="Burgering B.M.T."/>
            <person name="Zwartkruis F."/>
            <person name="Eijkelkamp N."/>
            <person name="Falnes P.O."/>
        </authorList>
    </citation>
    <scope>FUNCTION</scope>
    <scope>CATALYTIC ACTIVITY</scope>
</reference>
<comment type="function">
    <text evidence="2">Mitochondrial protein-lysine N-methyltransferase that trimethylates ATP synthase subunit C. Trimethylation is required for proper incorporation of the C subunit into the ATP synthase complex and mitochondrial respiration.</text>
</comment>
<comment type="catalytic activity">
    <reaction evidence="2">
        <text>L-lysyl-[protein] + 3 S-adenosyl-L-methionine = N(6),N(6),N(6)-trimethyl-L-lysyl-[protein] + 3 S-adenosyl-L-homocysteine + 3 H(+)</text>
        <dbReference type="Rhea" id="RHEA:54192"/>
        <dbReference type="Rhea" id="RHEA-COMP:9752"/>
        <dbReference type="Rhea" id="RHEA-COMP:13826"/>
        <dbReference type="ChEBI" id="CHEBI:15378"/>
        <dbReference type="ChEBI" id="CHEBI:29969"/>
        <dbReference type="ChEBI" id="CHEBI:57856"/>
        <dbReference type="ChEBI" id="CHEBI:59789"/>
        <dbReference type="ChEBI" id="CHEBI:61961"/>
    </reaction>
    <physiologicalReaction direction="left-to-right" evidence="2">
        <dbReference type="Rhea" id="RHEA:54193"/>
    </physiologicalReaction>
</comment>
<comment type="subcellular location">
    <subcellularLocation>
        <location evidence="1">Mitochondrion</location>
    </subcellularLocation>
</comment>
<comment type="similarity">
    <text evidence="3">Belongs to the ANT/ATPSC lysine N-methyltransferase family.</text>
</comment>